<dbReference type="EC" id="6.1.1.5" evidence="1"/>
<dbReference type="EMBL" id="BA000019">
    <property type="protein sequence ID" value="BAB73030.1"/>
    <property type="molecule type" value="Genomic_DNA"/>
</dbReference>
<dbReference type="PIR" id="AF1940">
    <property type="entry name" value="AF1940"/>
</dbReference>
<dbReference type="RefSeq" id="WP_010995247.1">
    <property type="nucleotide sequence ID" value="NZ_RSCN01000008.1"/>
</dbReference>
<dbReference type="SMR" id="Q8YXY3"/>
<dbReference type="STRING" id="103690.gene:10493087"/>
<dbReference type="KEGG" id="ana:alr1073"/>
<dbReference type="eggNOG" id="COG0060">
    <property type="taxonomic scope" value="Bacteria"/>
</dbReference>
<dbReference type="OrthoDB" id="9810365at2"/>
<dbReference type="Proteomes" id="UP000002483">
    <property type="component" value="Chromosome"/>
</dbReference>
<dbReference type="GO" id="GO:0005737">
    <property type="term" value="C:cytoplasm"/>
    <property type="evidence" value="ECO:0007669"/>
    <property type="project" value="UniProtKB-SubCell"/>
</dbReference>
<dbReference type="GO" id="GO:0002161">
    <property type="term" value="F:aminoacyl-tRNA deacylase activity"/>
    <property type="evidence" value="ECO:0007669"/>
    <property type="project" value="InterPro"/>
</dbReference>
<dbReference type="GO" id="GO:0005524">
    <property type="term" value="F:ATP binding"/>
    <property type="evidence" value="ECO:0007669"/>
    <property type="project" value="UniProtKB-UniRule"/>
</dbReference>
<dbReference type="GO" id="GO:0004822">
    <property type="term" value="F:isoleucine-tRNA ligase activity"/>
    <property type="evidence" value="ECO:0007669"/>
    <property type="project" value="UniProtKB-UniRule"/>
</dbReference>
<dbReference type="GO" id="GO:0000049">
    <property type="term" value="F:tRNA binding"/>
    <property type="evidence" value="ECO:0007669"/>
    <property type="project" value="InterPro"/>
</dbReference>
<dbReference type="GO" id="GO:0008270">
    <property type="term" value="F:zinc ion binding"/>
    <property type="evidence" value="ECO:0007669"/>
    <property type="project" value="UniProtKB-UniRule"/>
</dbReference>
<dbReference type="GO" id="GO:0006428">
    <property type="term" value="P:isoleucyl-tRNA aminoacylation"/>
    <property type="evidence" value="ECO:0007669"/>
    <property type="project" value="UniProtKB-UniRule"/>
</dbReference>
<dbReference type="CDD" id="cd07960">
    <property type="entry name" value="Anticodon_Ia_Ile_BEm"/>
    <property type="match status" value="1"/>
</dbReference>
<dbReference type="CDD" id="cd00818">
    <property type="entry name" value="IleRS_core"/>
    <property type="match status" value="1"/>
</dbReference>
<dbReference type="FunFam" id="1.10.730.20:FF:000001">
    <property type="entry name" value="Isoleucine--tRNA ligase"/>
    <property type="match status" value="1"/>
</dbReference>
<dbReference type="FunFam" id="3.40.50.620:FF:000152">
    <property type="entry name" value="Isoleucine--tRNA ligase"/>
    <property type="match status" value="1"/>
</dbReference>
<dbReference type="FunFam" id="3.90.740.10:FF:000013">
    <property type="entry name" value="Isoleucine--tRNA ligase, chloroplastic/mitochondrial"/>
    <property type="match status" value="1"/>
</dbReference>
<dbReference type="Gene3D" id="1.10.730.20">
    <property type="match status" value="1"/>
</dbReference>
<dbReference type="Gene3D" id="3.40.50.620">
    <property type="entry name" value="HUPs"/>
    <property type="match status" value="2"/>
</dbReference>
<dbReference type="Gene3D" id="1.10.10.830">
    <property type="entry name" value="Ile-tRNA synthetase CP2 domain-like"/>
    <property type="match status" value="1"/>
</dbReference>
<dbReference type="Gene3D" id="3.90.740.10">
    <property type="entry name" value="Valyl/Leucyl/Isoleucyl-tRNA synthetase, editing domain"/>
    <property type="match status" value="1"/>
</dbReference>
<dbReference type="HAMAP" id="MF_02002">
    <property type="entry name" value="Ile_tRNA_synth_type1"/>
    <property type="match status" value="1"/>
</dbReference>
<dbReference type="InterPro" id="IPR001412">
    <property type="entry name" value="aa-tRNA-synth_I_CS"/>
</dbReference>
<dbReference type="InterPro" id="IPR002300">
    <property type="entry name" value="aa-tRNA-synth_Ia"/>
</dbReference>
<dbReference type="InterPro" id="IPR033708">
    <property type="entry name" value="Anticodon_Ile_BEm"/>
</dbReference>
<dbReference type="InterPro" id="IPR002301">
    <property type="entry name" value="Ile-tRNA-ligase"/>
</dbReference>
<dbReference type="InterPro" id="IPR023585">
    <property type="entry name" value="Ile-tRNA-ligase_type1"/>
</dbReference>
<dbReference type="InterPro" id="IPR050081">
    <property type="entry name" value="Ile-tRNA_ligase"/>
</dbReference>
<dbReference type="InterPro" id="IPR013155">
    <property type="entry name" value="M/V/L/I-tRNA-synth_anticd-bd"/>
</dbReference>
<dbReference type="InterPro" id="IPR014729">
    <property type="entry name" value="Rossmann-like_a/b/a_fold"/>
</dbReference>
<dbReference type="InterPro" id="IPR009080">
    <property type="entry name" value="tRNAsynth_Ia_anticodon-bd"/>
</dbReference>
<dbReference type="InterPro" id="IPR009008">
    <property type="entry name" value="Val/Leu/Ile-tRNA-synth_edit"/>
</dbReference>
<dbReference type="InterPro" id="IPR010663">
    <property type="entry name" value="Znf_FPG/IleRS"/>
</dbReference>
<dbReference type="NCBIfam" id="TIGR00392">
    <property type="entry name" value="ileS"/>
    <property type="match status" value="1"/>
</dbReference>
<dbReference type="PANTHER" id="PTHR42765:SF1">
    <property type="entry name" value="ISOLEUCINE--TRNA LIGASE, MITOCHONDRIAL"/>
    <property type="match status" value="1"/>
</dbReference>
<dbReference type="PANTHER" id="PTHR42765">
    <property type="entry name" value="SOLEUCYL-TRNA SYNTHETASE"/>
    <property type="match status" value="1"/>
</dbReference>
<dbReference type="Pfam" id="PF08264">
    <property type="entry name" value="Anticodon_1"/>
    <property type="match status" value="1"/>
</dbReference>
<dbReference type="Pfam" id="PF00133">
    <property type="entry name" value="tRNA-synt_1"/>
    <property type="match status" value="1"/>
</dbReference>
<dbReference type="Pfam" id="PF06827">
    <property type="entry name" value="zf-FPG_IleRS"/>
    <property type="match status" value="1"/>
</dbReference>
<dbReference type="PRINTS" id="PR00984">
    <property type="entry name" value="TRNASYNTHILE"/>
</dbReference>
<dbReference type="SUPFAM" id="SSF47323">
    <property type="entry name" value="Anticodon-binding domain of a subclass of class I aminoacyl-tRNA synthetases"/>
    <property type="match status" value="1"/>
</dbReference>
<dbReference type="SUPFAM" id="SSF52374">
    <property type="entry name" value="Nucleotidylyl transferase"/>
    <property type="match status" value="1"/>
</dbReference>
<dbReference type="SUPFAM" id="SSF50677">
    <property type="entry name" value="ValRS/IleRS/LeuRS editing domain"/>
    <property type="match status" value="1"/>
</dbReference>
<dbReference type="PROSITE" id="PS00178">
    <property type="entry name" value="AA_TRNA_LIGASE_I"/>
    <property type="match status" value="1"/>
</dbReference>
<comment type="function">
    <text evidence="1">Catalyzes the attachment of isoleucine to tRNA(Ile). As IleRS can inadvertently accommodate and process structurally similar amino acids such as valine, to avoid such errors it has two additional distinct tRNA(Ile)-dependent editing activities. One activity is designated as 'pretransfer' editing and involves the hydrolysis of activated Val-AMP. The other activity is designated 'posttransfer' editing and involves deacylation of mischarged Val-tRNA(Ile).</text>
</comment>
<comment type="catalytic activity">
    <reaction evidence="1">
        <text>tRNA(Ile) + L-isoleucine + ATP = L-isoleucyl-tRNA(Ile) + AMP + diphosphate</text>
        <dbReference type="Rhea" id="RHEA:11060"/>
        <dbReference type="Rhea" id="RHEA-COMP:9666"/>
        <dbReference type="Rhea" id="RHEA-COMP:9695"/>
        <dbReference type="ChEBI" id="CHEBI:30616"/>
        <dbReference type="ChEBI" id="CHEBI:33019"/>
        <dbReference type="ChEBI" id="CHEBI:58045"/>
        <dbReference type="ChEBI" id="CHEBI:78442"/>
        <dbReference type="ChEBI" id="CHEBI:78528"/>
        <dbReference type="ChEBI" id="CHEBI:456215"/>
        <dbReference type="EC" id="6.1.1.5"/>
    </reaction>
</comment>
<comment type="cofactor">
    <cofactor evidence="1">
        <name>Zn(2+)</name>
        <dbReference type="ChEBI" id="CHEBI:29105"/>
    </cofactor>
    <text evidence="1">Binds 1 zinc ion per subunit.</text>
</comment>
<comment type="subunit">
    <text evidence="1">Monomer.</text>
</comment>
<comment type="subcellular location">
    <subcellularLocation>
        <location evidence="1">Cytoplasm</location>
    </subcellularLocation>
</comment>
<comment type="domain">
    <text evidence="1">IleRS has two distinct active sites: one for aminoacylation and one for editing. The misactivated valine is translocated from the active site to the editing site, which sterically excludes the correctly activated isoleucine. The single editing site contains two valyl binding pockets, one specific for each substrate (Val-AMP or Val-tRNA(Ile)).</text>
</comment>
<comment type="similarity">
    <text evidence="1">Belongs to the class-I aminoacyl-tRNA synthetase family. IleS type 1 subfamily.</text>
</comment>
<reference key="1">
    <citation type="journal article" date="2001" name="DNA Res.">
        <title>Complete genomic sequence of the filamentous nitrogen-fixing cyanobacterium Anabaena sp. strain PCC 7120.</title>
        <authorList>
            <person name="Kaneko T."/>
            <person name="Nakamura Y."/>
            <person name="Wolk C.P."/>
            <person name="Kuritz T."/>
            <person name="Sasamoto S."/>
            <person name="Watanabe A."/>
            <person name="Iriguchi M."/>
            <person name="Ishikawa A."/>
            <person name="Kawashima K."/>
            <person name="Kimura T."/>
            <person name="Kishida Y."/>
            <person name="Kohara M."/>
            <person name="Matsumoto M."/>
            <person name="Matsuno A."/>
            <person name="Muraki A."/>
            <person name="Nakazaki N."/>
            <person name="Shimpo S."/>
            <person name="Sugimoto M."/>
            <person name="Takazawa M."/>
            <person name="Yamada M."/>
            <person name="Yasuda M."/>
            <person name="Tabata S."/>
        </authorList>
    </citation>
    <scope>NUCLEOTIDE SEQUENCE [LARGE SCALE GENOMIC DNA]</scope>
    <source>
        <strain>PCC 7120 / SAG 25.82 / UTEX 2576</strain>
    </source>
</reference>
<protein>
    <recommendedName>
        <fullName evidence="1">Isoleucine--tRNA ligase</fullName>
        <ecNumber evidence="1">6.1.1.5</ecNumber>
    </recommendedName>
    <alternativeName>
        <fullName evidence="1">Isoleucyl-tRNA synthetase</fullName>
        <shortName evidence="1">IleRS</shortName>
    </alternativeName>
</protein>
<evidence type="ECO:0000255" key="1">
    <source>
        <dbReference type="HAMAP-Rule" id="MF_02002"/>
    </source>
</evidence>
<sequence>MTETGSYKDTVNLPKTNFDMRANAIKREPEIQKFWEENKIFESLSQNNPGELFILHDGPPYANGSLHIGHALNKILKDIINRYQLLQGRKVRYVPGWDCHGLPIELKVLQNLKSAERQNLTPLQLRQKAKEFALATVDNQRQNFKRYGVWGDWDNPYLTLKPEYEAAQIGVFGQMVLKGYIYRGLKPVHWSPSSKTALAEAELEYPEGHTSRSIYAAFPVTSFAEAAKPLLGEYLPDLGVAIWTTTPWTIPGNLAVAVNGDLNYSLVEVSRIGAETQSNFKYLIVAADLVERLAATISAQLTVKATFKGKELEHTTYRHPLFDRESPVVVGGDYITTESGTGLVHTAPGHGQEDYVVGLRYGLPILAPVDDNGDFTQEAGQFAGLNVLGEGNQAVIDALTAAGSLLKEEAYAHKYPYDWRTKKPTIFRATEQWFASVEGFRDEALKAIAAVKWIPAQGENRITPMVAERSDWCISRQRSWGVPIPVFYDEETGEPLLNEETINYVQAIIAEKGSDAWWELSVAELLPESYRNNGRSYRRGTDTMDVWFDSGSSWASVVKQRPELRYPADMYLEGSDQHRGWFQSSLLTSVSVNGIAPYKTVLTHGFVLDEQGRKMSKSEGNVVDPAIIINGGKDQKKEPPYGADVMRLWASSVDYTGDVRLGGNIIKQLNDVRGKIRNTARFLLGSLYDFDPEKNAVQFEEMPQLDKYMLHRIREVFEEVTEAFESFQFFRFFQTVQNFCVVDLSNFYLDVAKDRLYISAPDAFRRRSCQTVIHIALENLARAIAPVLCHTAEDIWQYLPYKTPYKSVFEAGWVQVEEKWHNPELAEFWQQLRQLRTDVNKVLEQARVEKMIGSSLEAKALIYVKDANSRKAIATLNPEVGNGVDELRYLFLTSQVELLDSADKLQDGKYTSQSDSWGIGVVNAEGQKCDRCWNYSTHVGESAEHPLLCERCVPALAGEF</sequence>
<keyword id="KW-0030">Aminoacyl-tRNA synthetase</keyword>
<keyword id="KW-0067">ATP-binding</keyword>
<keyword id="KW-0963">Cytoplasm</keyword>
<keyword id="KW-0436">Ligase</keyword>
<keyword id="KW-0479">Metal-binding</keyword>
<keyword id="KW-0547">Nucleotide-binding</keyword>
<keyword id="KW-0648">Protein biosynthesis</keyword>
<keyword id="KW-1185">Reference proteome</keyword>
<keyword id="KW-0862">Zinc</keyword>
<accession>Q8YXY3</accession>
<organism>
    <name type="scientific">Nostoc sp. (strain PCC 7120 / SAG 25.82 / UTEX 2576)</name>
    <dbReference type="NCBI Taxonomy" id="103690"/>
    <lineage>
        <taxon>Bacteria</taxon>
        <taxon>Bacillati</taxon>
        <taxon>Cyanobacteriota</taxon>
        <taxon>Cyanophyceae</taxon>
        <taxon>Nostocales</taxon>
        <taxon>Nostocaceae</taxon>
        <taxon>Nostoc</taxon>
    </lineage>
</organism>
<gene>
    <name evidence="1" type="primary">ileS</name>
    <name type="ordered locus">alr1073</name>
</gene>
<proteinExistence type="inferred from homology"/>
<name>SYI_NOSS1</name>
<feature type="chain" id="PRO_0000098340" description="Isoleucine--tRNA ligase">
    <location>
        <begin position="1"/>
        <end position="960"/>
    </location>
</feature>
<feature type="short sequence motif" description="'HIGH' region">
    <location>
        <begin position="60"/>
        <end position="70"/>
    </location>
</feature>
<feature type="short sequence motif" description="'KMSKS' region">
    <location>
        <begin position="614"/>
        <end position="618"/>
    </location>
</feature>
<feature type="binding site" evidence="1">
    <location>
        <position position="573"/>
    </location>
    <ligand>
        <name>L-isoleucyl-5'-AMP</name>
        <dbReference type="ChEBI" id="CHEBI:178002"/>
    </ligand>
</feature>
<feature type="binding site" evidence="1">
    <location>
        <position position="617"/>
    </location>
    <ligand>
        <name>ATP</name>
        <dbReference type="ChEBI" id="CHEBI:30616"/>
    </ligand>
</feature>
<feature type="binding site" evidence="1">
    <location>
        <position position="929"/>
    </location>
    <ligand>
        <name>Zn(2+)</name>
        <dbReference type="ChEBI" id="CHEBI:29105"/>
    </ligand>
</feature>
<feature type="binding site" evidence="1">
    <location>
        <position position="932"/>
    </location>
    <ligand>
        <name>Zn(2+)</name>
        <dbReference type="ChEBI" id="CHEBI:29105"/>
    </ligand>
</feature>
<feature type="binding site" evidence="1">
    <location>
        <position position="949"/>
    </location>
    <ligand>
        <name>Zn(2+)</name>
        <dbReference type="ChEBI" id="CHEBI:29105"/>
    </ligand>
</feature>
<feature type="binding site" evidence="1">
    <location>
        <position position="952"/>
    </location>
    <ligand>
        <name>Zn(2+)</name>
        <dbReference type="ChEBI" id="CHEBI:29105"/>
    </ligand>
</feature>